<protein>
    <recommendedName>
        <fullName evidence="1">Probable transcriptional regulatory protein stu0195</fullName>
    </recommendedName>
</protein>
<accession>Q5M679</accession>
<proteinExistence type="inferred from homology"/>
<gene>
    <name type="ordered locus">stu0195</name>
</gene>
<evidence type="ECO:0000255" key="1">
    <source>
        <dbReference type="HAMAP-Rule" id="MF_00918"/>
    </source>
</evidence>
<dbReference type="EMBL" id="CP000023">
    <property type="protein sequence ID" value="AAV59920.1"/>
    <property type="molecule type" value="Genomic_DNA"/>
</dbReference>
<dbReference type="SMR" id="Q5M679"/>
<dbReference type="STRING" id="264199.stu0195"/>
<dbReference type="KEGG" id="stl:stu0195"/>
<dbReference type="eggNOG" id="COG0217">
    <property type="taxonomic scope" value="Bacteria"/>
</dbReference>
<dbReference type="HOGENOM" id="CLU_062974_2_0_9"/>
<dbReference type="Proteomes" id="UP000001170">
    <property type="component" value="Chromosome"/>
</dbReference>
<dbReference type="GO" id="GO:0005829">
    <property type="term" value="C:cytosol"/>
    <property type="evidence" value="ECO:0007669"/>
    <property type="project" value="TreeGrafter"/>
</dbReference>
<dbReference type="GO" id="GO:0003677">
    <property type="term" value="F:DNA binding"/>
    <property type="evidence" value="ECO:0007669"/>
    <property type="project" value="UniProtKB-UniRule"/>
</dbReference>
<dbReference type="GO" id="GO:0006355">
    <property type="term" value="P:regulation of DNA-templated transcription"/>
    <property type="evidence" value="ECO:0007669"/>
    <property type="project" value="UniProtKB-UniRule"/>
</dbReference>
<dbReference type="FunFam" id="1.10.10.200:FF:000003">
    <property type="entry name" value="Probable transcriptional regulatory protein YeeN"/>
    <property type="match status" value="1"/>
</dbReference>
<dbReference type="Gene3D" id="1.10.10.200">
    <property type="match status" value="1"/>
</dbReference>
<dbReference type="Gene3D" id="3.30.70.980">
    <property type="match status" value="2"/>
</dbReference>
<dbReference type="HAMAP" id="MF_00693">
    <property type="entry name" value="Transcrip_reg_TACO1"/>
    <property type="match status" value="1"/>
</dbReference>
<dbReference type="HAMAP" id="MF_00918">
    <property type="entry name" value="Transcrip_reg_TACO1_YeeN"/>
    <property type="match status" value="1"/>
</dbReference>
<dbReference type="InterPro" id="IPR017856">
    <property type="entry name" value="Integrase-like_N"/>
</dbReference>
<dbReference type="InterPro" id="IPR048300">
    <property type="entry name" value="TACO1_YebC-like_2nd/3rd_dom"/>
</dbReference>
<dbReference type="InterPro" id="IPR049083">
    <property type="entry name" value="TACO1_YebC_N"/>
</dbReference>
<dbReference type="InterPro" id="IPR002876">
    <property type="entry name" value="Transcrip_reg_TACO1-like"/>
</dbReference>
<dbReference type="InterPro" id="IPR026564">
    <property type="entry name" value="Transcrip_reg_TACO1-like_dom3"/>
</dbReference>
<dbReference type="InterPro" id="IPR026562">
    <property type="entry name" value="Transcrip_reg_TACO1_YeeN"/>
</dbReference>
<dbReference type="InterPro" id="IPR029072">
    <property type="entry name" value="YebC-like"/>
</dbReference>
<dbReference type="NCBIfam" id="NF001030">
    <property type="entry name" value="PRK00110.1"/>
    <property type="match status" value="1"/>
</dbReference>
<dbReference type="NCBIfam" id="NF009044">
    <property type="entry name" value="PRK12378.1"/>
    <property type="match status" value="1"/>
</dbReference>
<dbReference type="NCBIfam" id="TIGR01033">
    <property type="entry name" value="YebC/PmpR family DNA-binding transcriptional regulator"/>
    <property type="match status" value="1"/>
</dbReference>
<dbReference type="PANTHER" id="PTHR12532">
    <property type="entry name" value="TRANSLATIONAL ACTIVATOR OF CYTOCHROME C OXIDASE 1"/>
    <property type="match status" value="1"/>
</dbReference>
<dbReference type="PANTHER" id="PTHR12532:SF0">
    <property type="entry name" value="TRANSLATIONAL ACTIVATOR OF CYTOCHROME C OXIDASE 1"/>
    <property type="match status" value="1"/>
</dbReference>
<dbReference type="Pfam" id="PF20772">
    <property type="entry name" value="TACO1_YebC_N"/>
    <property type="match status" value="1"/>
</dbReference>
<dbReference type="Pfam" id="PF01709">
    <property type="entry name" value="Transcrip_reg"/>
    <property type="match status" value="1"/>
</dbReference>
<dbReference type="SUPFAM" id="SSF75625">
    <property type="entry name" value="YebC-like"/>
    <property type="match status" value="1"/>
</dbReference>
<sequence>MNPMGRKWANIVAKKTAKDGANSKIYAKFGVEIYVAAKQGEPDPESNSALKFVLERAKQAQVPKHVIDKAIDKAKGNTDETFVEGRYEGFGPNGSMIIVDTLTSNVNRTAANVRTAFGKNGGNMGASGSVSYMFDKKGVIVFAGEDADAIFEQLLEADVDVEDVEAEDGTITVYTEPTDLHKALEALRANGQEEFQVTELEMIPQTEVTLEGEDLETFKGLIDALEADDDVQKVYHNVADM</sequence>
<keyword id="KW-0963">Cytoplasm</keyword>
<keyword id="KW-0238">DNA-binding</keyword>
<keyword id="KW-1185">Reference proteome</keyword>
<keyword id="KW-0804">Transcription</keyword>
<keyword id="KW-0805">Transcription regulation</keyword>
<feature type="chain" id="PRO_0000175911" description="Probable transcriptional regulatory protein stu0195">
    <location>
        <begin position="1"/>
        <end position="241"/>
    </location>
</feature>
<reference key="1">
    <citation type="journal article" date="2004" name="Nat. Biotechnol.">
        <title>Complete sequence and comparative genome analysis of the dairy bacterium Streptococcus thermophilus.</title>
        <authorList>
            <person name="Bolotin A."/>
            <person name="Quinquis B."/>
            <person name="Renault P."/>
            <person name="Sorokin A."/>
            <person name="Ehrlich S.D."/>
            <person name="Kulakauskas S."/>
            <person name="Lapidus A."/>
            <person name="Goltsman E."/>
            <person name="Mazur M."/>
            <person name="Pusch G.D."/>
            <person name="Fonstein M."/>
            <person name="Overbeek R."/>
            <person name="Kyprides N."/>
            <person name="Purnelle B."/>
            <person name="Prozzi D."/>
            <person name="Ngui K."/>
            <person name="Masuy D."/>
            <person name="Hancy F."/>
            <person name="Burteau S."/>
            <person name="Boutry M."/>
            <person name="Delcour J."/>
            <person name="Goffeau A."/>
            <person name="Hols P."/>
        </authorList>
    </citation>
    <scope>NUCLEOTIDE SEQUENCE [LARGE SCALE GENOMIC DNA]</scope>
    <source>
        <strain>ATCC BAA-250 / LMG 18311</strain>
    </source>
</reference>
<organism>
    <name type="scientific">Streptococcus thermophilus (strain ATCC BAA-250 / LMG 18311)</name>
    <dbReference type="NCBI Taxonomy" id="264199"/>
    <lineage>
        <taxon>Bacteria</taxon>
        <taxon>Bacillati</taxon>
        <taxon>Bacillota</taxon>
        <taxon>Bacilli</taxon>
        <taxon>Lactobacillales</taxon>
        <taxon>Streptococcaceae</taxon>
        <taxon>Streptococcus</taxon>
    </lineage>
</organism>
<comment type="subcellular location">
    <subcellularLocation>
        <location evidence="1">Cytoplasm</location>
    </subcellularLocation>
</comment>
<comment type="similarity">
    <text evidence="1">Belongs to the TACO1 family. YeeN subfamily.</text>
</comment>
<name>Y195_STRT2</name>